<accession>P0DML4</accession>
<name>APOC4_ORCOR</name>
<feature type="signal peptide" evidence="2">
    <location>
        <begin position="1"/>
        <end position="27"/>
    </location>
</feature>
<feature type="chain" id="PRO_0000429972" description="Apolipoprotein C-IV">
    <location>
        <begin position="28"/>
        <end position="127"/>
    </location>
</feature>
<comment type="function">
    <text evidence="1">May participate in lipoprotein metabolism.</text>
</comment>
<comment type="subcellular location">
    <subcellularLocation>
        <location evidence="1">Secreted</location>
    </subcellularLocation>
</comment>
<comment type="similarity">
    <text evidence="3">Belongs to the apolipoprotein C4 family.</text>
</comment>
<dbReference type="EMBL" id="ANOL02028376">
    <property type="status" value="NOT_ANNOTATED_CDS"/>
    <property type="molecule type" value="Genomic_DNA"/>
</dbReference>
<dbReference type="RefSeq" id="XP_004271405.1">
    <property type="nucleotide sequence ID" value="XM_004271357.1"/>
</dbReference>
<dbReference type="GeneID" id="101273706"/>
<dbReference type="KEGG" id="oor:101273706"/>
<dbReference type="CTD" id="346"/>
<dbReference type="GO" id="GO:0034364">
    <property type="term" value="C:high-density lipoprotein particle"/>
    <property type="evidence" value="ECO:0007669"/>
    <property type="project" value="TreeGrafter"/>
</dbReference>
<dbReference type="GO" id="GO:0034361">
    <property type="term" value="C:very-low-density lipoprotein particle"/>
    <property type="evidence" value="ECO:0007669"/>
    <property type="project" value="TreeGrafter"/>
</dbReference>
<dbReference type="GO" id="GO:0006869">
    <property type="term" value="P:lipid transport"/>
    <property type="evidence" value="ECO:0007669"/>
    <property type="project" value="UniProtKB-KW"/>
</dbReference>
<dbReference type="GO" id="GO:0010890">
    <property type="term" value="P:positive regulation of triglyceride storage"/>
    <property type="evidence" value="ECO:0007669"/>
    <property type="project" value="TreeGrafter"/>
</dbReference>
<dbReference type="GO" id="GO:0070328">
    <property type="term" value="P:triglyceride homeostasis"/>
    <property type="evidence" value="ECO:0007669"/>
    <property type="project" value="TreeGrafter"/>
</dbReference>
<dbReference type="InterPro" id="IPR028120">
    <property type="entry name" value="APOC4"/>
</dbReference>
<dbReference type="PANTHER" id="PTHR32288">
    <property type="entry name" value="APOLIPOPROTEIN C-IV"/>
    <property type="match status" value="1"/>
</dbReference>
<dbReference type="PANTHER" id="PTHR32288:SF0">
    <property type="entry name" value="APOLIPOPROTEIN C-IV"/>
    <property type="match status" value="1"/>
</dbReference>
<dbReference type="Pfam" id="PF15119">
    <property type="entry name" value="APOC4"/>
    <property type="match status" value="1"/>
</dbReference>
<organism>
    <name type="scientific">Orcinus orca</name>
    <name type="common">Killer whale</name>
    <name type="synonym">Delphinus orca</name>
    <dbReference type="NCBI Taxonomy" id="9733"/>
    <lineage>
        <taxon>Eukaryota</taxon>
        <taxon>Metazoa</taxon>
        <taxon>Chordata</taxon>
        <taxon>Craniata</taxon>
        <taxon>Vertebrata</taxon>
        <taxon>Euteleostomi</taxon>
        <taxon>Mammalia</taxon>
        <taxon>Eutheria</taxon>
        <taxon>Laurasiatheria</taxon>
        <taxon>Artiodactyla</taxon>
        <taxon>Whippomorpha</taxon>
        <taxon>Cetacea</taxon>
        <taxon>Odontoceti</taxon>
        <taxon>Delphinidae</taxon>
        <taxon>Orcinus</taxon>
    </lineage>
</organism>
<sequence length="127" mass="14320">MLFPGCRSRALSSLCFCVLVLACVVACQQEGPGGNSSPPPEPASSSWSLVPGKMKEWMESLVTRTRESWQWFWGPRAFQGFVQTFYDDHLGDLGSHTQAWLHSSKDSLLNKAYNLCPQLLCRDSYWD</sequence>
<gene>
    <name type="primary">APOC4</name>
</gene>
<protein>
    <recommendedName>
        <fullName>Apolipoprotein C-IV</fullName>
        <shortName>Apo-CIV</shortName>
        <shortName>ApoC-IV</shortName>
    </recommendedName>
    <alternativeName>
        <fullName>Apolipoprotein C4</fullName>
    </alternativeName>
</protein>
<evidence type="ECO:0000250" key="1"/>
<evidence type="ECO:0000250" key="2">
    <source>
        <dbReference type="UniProtKB" id="P55057"/>
    </source>
</evidence>
<evidence type="ECO:0000305" key="3"/>
<reference key="1">
    <citation type="submission" date="2013-01" db="EMBL/GenBank/DDBJ databases">
        <authorList>
            <person name="Foote A.D."/>
            <person name="Gilbert M.T.P."/>
            <person name="Liu Y."/>
            <person name="Lee S.L."/>
            <person name="Dugan-Rocha S."/>
            <person name="Jhangiani S."/>
            <person name="Bandaranaike D."/>
            <person name="Batterton M."/>
            <person name="Bellair M."/>
            <person name="Bess C."/>
            <person name="Blankenburg K."/>
            <person name="Chao H."/>
            <person name="Denson S."/>
            <person name="Dinh H."/>
            <person name="Elkadiri S."/>
            <person name="Fu Q."/>
            <person name="Hernandez B."/>
            <person name="Javaid M."/>
            <person name="Jayaseelan J.C."/>
            <person name="Lee S."/>
            <person name="Li M."/>
            <person name="Liu X."/>
            <person name="Matskevitch T."/>
            <person name="Munidasa M."/>
            <person name="Najjar R."/>
            <person name="Nguyen L."/>
            <person name="Ongeri F."/>
            <person name="Osuji N."/>
            <person name="Perales L."/>
            <person name="Pu L.-L."/>
            <person name="Puazo M."/>
            <person name="Qi S."/>
            <person name="Qu C."/>
            <person name="Quiroz J."/>
            <person name="Raj R."/>
            <person name="Shafer J."/>
            <person name="Shen H."/>
            <person name="Tabassum N."/>
            <person name="Tang L.-Y."/>
            <person name="Taylor A."/>
            <person name="Weissenberger G."/>
            <person name="Wu Y.-Q."/>
            <person name="Xin Y."/>
            <person name="Zhang Y."/>
            <person name="Zhu Y."/>
            <person name="Zou X."/>
            <person name="Muzny D."/>
            <person name="Worley K."/>
            <person name="Gibbs R."/>
        </authorList>
    </citation>
    <scope>NUCLEOTIDE SEQUENCE [LARGE SCALE GENOMIC DNA]</scope>
</reference>
<reference key="2">
    <citation type="unpublished observations" date="2014-06">
        <authorList>
            <person name="Puppione D.L."/>
        </authorList>
    </citation>
    <scope>IDENTIFICATION</scope>
</reference>
<proteinExistence type="inferred from homology"/>
<keyword id="KW-0445">Lipid transport</keyword>
<keyword id="KW-0964">Secreted</keyword>
<keyword id="KW-0732">Signal</keyword>
<keyword id="KW-0813">Transport</keyword>